<keyword id="KW-0131">Cell cycle</keyword>
<keyword id="KW-0132">Cell division</keyword>
<keyword id="KW-0997">Cell inner membrane</keyword>
<keyword id="KW-1003">Cell membrane</keyword>
<keyword id="KW-0133">Cell shape</keyword>
<keyword id="KW-0961">Cell wall biogenesis/degradation</keyword>
<keyword id="KW-0460">Magnesium</keyword>
<keyword id="KW-0472">Membrane</keyword>
<keyword id="KW-0479">Metal-binding</keyword>
<keyword id="KW-0573">Peptidoglycan synthesis</keyword>
<keyword id="KW-1185">Reference proteome</keyword>
<keyword id="KW-0808">Transferase</keyword>
<keyword id="KW-0812">Transmembrane</keyword>
<keyword id="KW-1133">Transmembrane helix</keyword>
<protein>
    <recommendedName>
        <fullName evidence="1">Phospho-N-acetylmuramoyl-pentapeptide-transferase</fullName>
        <ecNumber evidence="1">2.7.8.13</ecNumber>
    </recommendedName>
    <alternativeName>
        <fullName evidence="1">UDP-MurNAc-pentapeptide phosphotransferase</fullName>
    </alternativeName>
</protein>
<sequence>MLYYLFNYLDQLDFPGAGMFKYVSFRSGLALILSLFISTAIGRRIIDKLQMLQIGETVRNLGLEGQMSKKGTPTMGGIIIIIAILIPTLLCAKLNNIYVILMLVTTVWLGALGFADDYIKVFKKNKEGMHGRFKIVGQVGLGLIVGLVLFMSPDVVIKENMEVRHDNVIEEVRYHTVETKSTKTTIPFLKNNNFDYANLVNWAGDYKEEAAWLVFVLMVIFVVTAVSNGANMTDGLDGLAAGTSAIIGVALGILAYMSSHFEFASFLNIMFIPGAEELVVYAAAFIGATVGFLWYNSYPAQVFMGDTGSLTLGGIIAVFAIIIRKELLIPILCGIFLVENISVMLQVAYFKYTKKKYGEGRRIFKMAPLHHHFQKPGNAGIQALIQKPFNVVPESKIVVRFWLIGIILAVMTIVTLKMR</sequence>
<evidence type="ECO:0000255" key="1">
    <source>
        <dbReference type="HAMAP-Rule" id="MF_00038"/>
    </source>
</evidence>
<dbReference type="EC" id="2.7.8.13" evidence="1"/>
<dbReference type="EMBL" id="CP000140">
    <property type="protein sequence ID" value="ABR44210.1"/>
    <property type="molecule type" value="Genomic_DNA"/>
</dbReference>
<dbReference type="RefSeq" id="WP_005861367.1">
    <property type="nucleotide sequence ID" value="NZ_LR215978.1"/>
</dbReference>
<dbReference type="SMR" id="A6LEU6"/>
<dbReference type="STRING" id="435591.BDI_2490"/>
<dbReference type="PaxDb" id="435591-BDI_2490"/>
<dbReference type="GeneID" id="93522485"/>
<dbReference type="KEGG" id="pdi:BDI_2490"/>
<dbReference type="eggNOG" id="COG0472">
    <property type="taxonomic scope" value="Bacteria"/>
</dbReference>
<dbReference type="HOGENOM" id="CLU_023982_0_0_10"/>
<dbReference type="BioCyc" id="PDIS435591:G1G5A-2559-MONOMER"/>
<dbReference type="UniPathway" id="UPA00219"/>
<dbReference type="Proteomes" id="UP000000566">
    <property type="component" value="Chromosome"/>
</dbReference>
<dbReference type="GO" id="GO:0005886">
    <property type="term" value="C:plasma membrane"/>
    <property type="evidence" value="ECO:0007669"/>
    <property type="project" value="UniProtKB-SubCell"/>
</dbReference>
<dbReference type="GO" id="GO:0046872">
    <property type="term" value="F:metal ion binding"/>
    <property type="evidence" value="ECO:0007669"/>
    <property type="project" value="UniProtKB-KW"/>
</dbReference>
<dbReference type="GO" id="GO:0008963">
    <property type="term" value="F:phospho-N-acetylmuramoyl-pentapeptide-transferase activity"/>
    <property type="evidence" value="ECO:0007669"/>
    <property type="project" value="UniProtKB-UniRule"/>
</dbReference>
<dbReference type="GO" id="GO:0051992">
    <property type="term" value="F:UDP-N-acetylmuramoyl-L-alanyl-D-glutamyl-meso-2,6-diaminopimelyl-D-alanyl-D-alanine:undecaprenyl-phosphate transferase activity"/>
    <property type="evidence" value="ECO:0007669"/>
    <property type="project" value="RHEA"/>
</dbReference>
<dbReference type="GO" id="GO:0051301">
    <property type="term" value="P:cell division"/>
    <property type="evidence" value="ECO:0007669"/>
    <property type="project" value="UniProtKB-KW"/>
</dbReference>
<dbReference type="GO" id="GO:0071555">
    <property type="term" value="P:cell wall organization"/>
    <property type="evidence" value="ECO:0007669"/>
    <property type="project" value="UniProtKB-KW"/>
</dbReference>
<dbReference type="GO" id="GO:0009252">
    <property type="term" value="P:peptidoglycan biosynthetic process"/>
    <property type="evidence" value="ECO:0007669"/>
    <property type="project" value="UniProtKB-UniRule"/>
</dbReference>
<dbReference type="GO" id="GO:0008360">
    <property type="term" value="P:regulation of cell shape"/>
    <property type="evidence" value="ECO:0007669"/>
    <property type="project" value="UniProtKB-KW"/>
</dbReference>
<dbReference type="CDD" id="cd06852">
    <property type="entry name" value="GT_MraY"/>
    <property type="match status" value="1"/>
</dbReference>
<dbReference type="HAMAP" id="MF_00038">
    <property type="entry name" value="MraY"/>
    <property type="match status" value="1"/>
</dbReference>
<dbReference type="InterPro" id="IPR000715">
    <property type="entry name" value="Glycosyl_transferase_4"/>
</dbReference>
<dbReference type="InterPro" id="IPR003524">
    <property type="entry name" value="PNAcMuramoyl-5peptid_Trfase"/>
</dbReference>
<dbReference type="InterPro" id="IPR018480">
    <property type="entry name" value="PNAcMuramoyl-5peptid_Trfase_CS"/>
</dbReference>
<dbReference type="NCBIfam" id="TIGR00445">
    <property type="entry name" value="mraY"/>
    <property type="match status" value="1"/>
</dbReference>
<dbReference type="PANTHER" id="PTHR22926">
    <property type="entry name" value="PHOSPHO-N-ACETYLMURAMOYL-PENTAPEPTIDE-TRANSFERASE"/>
    <property type="match status" value="1"/>
</dbReference>
<dbReference type="PANTHER" id="PTHR22926:SF5">
    <property type="entry name" value="PHOSPHO-N-ACETYLMURAMOYL-PENTAPEPTIDE-TRANSFERASE HOMOLOG"/>
    <property type="match status" value="1"/>
</dbReference>
<dbReference type="Pfam" id="PF00953">
    <property type="entry name" value="Glycos_transf_4"/>
    <property type="match status" value="1"/>
</dbReference>
<dbReference type="Pfam" id="PF10555">
    <property type="entry name" value="MraY_sig1"/>
    <property type="match status" value="1"/>
</dbReference>
<dbReference type="PROSITE" id="PS01347">
    <property type="entry name" value="MRAY_1"/>
    <property type="match status" value="1"/>
</dbReference>
<dbReference type="PROSITE" id="PS01348">
    <property type="entry name" value="MRAY_2"/>
    <property type="match status" value="1"/>
</dbReference>
<name>MRAY_PARD8</name>
<gene>
    <name evidence="1" type="primary">mraY</name>
    <name type="ordered locus">BDI_2490</name>
</gene>
<feature type="chain" id="PRO_1000003025" description="Phospho-N-acetylmuramoyl-pentapeptide-transferase">
    <location>
        <begin position="1"/>
        <end position="419"/>
    </location>
</feature>
<feature type="transmembrane region" description="Helical" evidence="1">
    <location>
        <begin position="22"/>
        <end position="42"/>
    </location>
</feature>
<feature type="transmembrane region" description="Helical" evidence="1">
    <location>
        <begin position="72"/>
        <end position="92"/>
    </location>
</feature>
<feature type="transmembrane region" description="Helical" evidence="1">
    <location>
        <begin position="94"/>
        <end position="114"/>
    </location>
</feature>
<feature type="transmembrane region" description="Helical" evidence="1">
    <location>
        <begin position="135"/>
        <end position="155"/>
    </location>
</feature>
<feature type="transmembrane region" description="Helical" evidence="1">
    <location>
        <begin position="210"/>
        <end position="230"/>
    </location>
</feature>
<feature type="transmembrane region" description="Helical" evidence="1">
    <location>
        <begin position="238"/>
        <end position="258"/>
    </location>
</feature>
<feature type="transmembrane region" description="Helical" evidence="1">
    <location>
        <begin position="266"/>
        <end position="286"/>
    </location>
</feature>
<feature type="transmembrane region" description="Helical" evidence="1">
    <location>
        <begin position="303"/>
        <end position="323"/>
    </location>
</feature>
<feature type="transmembrane region" description="Helical" evidence="1">
    <location>
        <begin position="327"/>
        <end position="347"/>
    </location>
</feature>
<feature type="transmembrane region" description="Helical" evidence="1">
    <location>
        <begin position="396"/>
        <end position="416"/>
    </location>
</feature>
<comment type="function">
    <text evidence="1">Catalyzes the initial step of the lipid cycle reactions in the biosynthesis of the cell wall peptidoglycan: transfers peptidoglycan precursor phospho-MurNAc-pentapeptide from UDP-MurNAc-pentapeptide onto the lipid carrier undecaprenyl phosphate, yielding undecaprenyl-pyrophosphoryl-MurNAc-pentapeptide, known as lipid I.</text>
</comment>
<comment type="catalytic activity">
    <reaction evidence="1">
        <text>UDP-N-acetyl-alpha-D-muramoyl-L-alanyl-gamma-D-glutamyl-meso-2,6-diaminopimeloyl-D-alanyl-D-alanine + di-trans,octa-cis-undecaprenyl phosphate = di-trans,octa-cis-undecaprenyl diphospho-N-acetyl-alpha-D-muramoyl-L-alanyl-D-glutamyl-meso-2,6-diaminopimeloyl-D-alanyl-D-alanine + UMP</text>
        <dbReference type="Rhea" id="RHEA:28386"/>
        <dbReference type="ChEBI" id="CHEBI:57865"/>
        <dbReference type="ChEBI" id="CHEBI:60392"/>
        <dbReference type="ChEBI" id="CHEBI:61386"/>
        <dbReference type="ChEBI" id="CHEBI:61387"/>
        <dbReference type="EC" id="2.7.8.13"/>
    </reaction>
</comment>
<comment type="cofactor">
    <cofactor evidence="1">
        <name>Mg(2+)</name>
        <dbReference type="ChEBI" id="CHEBI:18420"/>
    </cofactor>
</comment>
<comment type="pathway">
    <text evidence="1">Cell wall biogenesis; peptidoglycan biosynthesis.</text>
</comment>
<comment type="subcellular location">
    <subcellularLocation>
        <location evidence="1">Cell inner membrane</location>
        <topology evidence="1">Multi-pass membrane protein</topology>
    </subcellularLocation>
</comment>
<comment type="similarity">
    <text evidence="1">Belongs to the glycosyltransferase 4 family. MraY subfamily.</text>
</comment>
<accession>A6LEU6</accession>
<organism>
    <name type="scientific">Parabacteroides distasonis (strain ATCC 8503 / DSM 20701 / CIP 104284 / JCM 5825 / NCTC 11152)</name>
    <dbReference type="NCBI Taxonomy" id="435591"/>
    <lineage>
        <taxon>Bacteria</taxon>
        <taxon>Pseudomonadati</taxon>
        <taxon>Bacteroidota</taxon>
        <taxon>Bacteroidia</taxon>
        <taxon>Bacteroidales</taxon>
        <taxon>Tannerellaceae</taxon>
        <taxon>Parabacteroides</taxon>
    </lineage>
</organism>
<reference key="1">
    <citation type="journal article" date="2007" name="PLoS Biol.">
        <title>Evolution of symbiotic bacteria in the distal human intestine.</title>
        <authorList>
            <person name="Xu J."/>
            <person name="Mahowald M.A."/>
            <person name="Ley R.E."/>
            <person name="Lozupone C.A."/>
            <person name="Hamady M."/>
            <person name="Martens E.C."/>
            <person name="Henrissat B."/>
            <person name="Coutinho P.M."/>
            <person name="Minx P."/>
            <person name="Latreille P."/>
            <person name="Cordum H."/>
            <person name="Van Brunt A."/>
            <person name="Kim K."/>
            <person name="Fulton R.S."/>
            <person name="Fulton L.A."/>
            <person name="Clifton S.W."/>
            <person name="Wilson R.K."/>
            <person name="Knight R.D."/>
            <person name="Gordon J.I."/>
        </authorList>
    </citation>
    <scope>NUCLEOTIDE SEQUENCE [LARGE SCALE GENOMIC DNA]</scope>
    <source>
        <strain>ATCC 8503 / DSM 20701 / CIP 104284 / JCM 5825 / NCTC 11152</strain>
    </source>
</reference>
<proteinExistence type="inferred from homology"/>